<dbReference type="EMBL" id="CP001390">
    <property type="protein sequence ID" value="ACM21043.1"/>
    <property type="molecule type" value="Genomic_DNA"/>
</dbReference>
<dbReference type="RefSeq" id="WP_012647771.1">
    <property type="nucleotide sequence ID" value="NC_011979.1"/>
</dbReference>
<dbReference type="SMR" id="B9M1G1"/>
<dbReference type="STRING" id="316067.Geob_2693"/>
<dbReference type="KEGG" id="geo:Geob_2693"/>
<dbReference type="eggNOG" id="COG0858">
    <property type="taxonomic scope" value="Bacteria"/>
</dbReference>
<dbReference type="HOGENOM" id="CLU_089475_6_3_7"/>
<dbReference type="OrthoDB" id="307788at2"/>
<dbReference type="Proteomes" id="UP000007721">
    <property type="component" value="Chromosome"/>
</dbReference>
<dbReference type="GO" id="GO:0005829">
    <property type="term" value="C:cytosol"/>
    <property type="evidence" value="ECO:0007669"/>
    <property type="project" value="TreeGrafter"/>
</dbReference>
<dbReference type="GO" id="GO:0043024">
    <property type="term" value="F:ribosomal small subunit binding"/>
    <property type="evidence" value="ECO:0007669"/>
    <property type="project" value="TreeGrafter"/>
</dbReference>
<dbReference type="GO" id="GO:0030490">
    <property type="term" value="P:maturation of SSU-rRNA"/>
    <property type="evidence" value="ECO:0007669"/>
    <property type="project" value="UniProtKB-UniRule"/>
</dbReference>
<dbReference type="Gene3D" id="3.30.300.20">
    <property type="match status" value="1"/>
</dbReference>
<dbReference type="HAMAP" id="MF_00003">
    <property type="entry name" value="RbfA"/>
    <property type="match status" value="1"/>
</dbReference>
<dbReference type="InterPro" id="IPR015946">
    <property type="entry name" value="KH_dom-like_a/b"/>
</dbReference>
<dbReference type="InterPro" id="IPR000238">
    <property type="entry name" value="RbfA"/>
</dbReference>
<dbReference type="InterPro" id="IPR023799">
    <property type="entry name" value="RbfA_dom_sf"/>
</dbReference>
<dbReference type="InterPro" id="IPR020053">
    <property type="entry name" value="Ribosome-bd_factorA_CS"/>
</dbReference>
<dbReference type="NCBIfam" id="NF010388">
    <property type="entry name" value="PRK13815.1"/>
    <property type="match status" value="1"/>
</dbReference>
<dbReference type="NCBIfam" id="TIGR00082">
    <property type="entry name" value="rbfA"/>
    <property type="match status" value="1"/>
</dbReference>
<dbReference type="PANTHER" id="PTHR33515">
    <property type="entry name" value="RIBOSOME-BINDING FACTOR A, CHLOROPLASTIC-RELATED"/>
    <property type="match status" value="1"/>
</dbReference>
<dbReference type="PANTHER" id="PTHR33515:SF1">
    <property type="entry name" value="RIBOSOME-BINDING FACTOR A, CHLOROPLASTIC-RELATED"/>
    <property type="match status" value="1"/>
</dbReference>
<dbReference type="Pfam" id="PF02033">
    <property type="entry name" value="RBFA"/>
    <property type="match status" value="1"/>
</dbReference>
<dbReference type="SUPFAM" id="SSF89919">
    <property type="entry name" value="Ribosome-binding factor A, RbfA"/>
    <property type="match status" value="1"/>
</dbReference>
<dbReference type="PROSITE" id="PS01319">
    <property type="entry name" value="RBFA"/>
    <property type="match status" value="1"/>
</dbReference>
<accession>B9M1G1</accession>
<keyword id="KW-0963">Cytoplasm</keyword>
<keyword id="KW-1185">Reference proteome</keyword>
<keyword id="KW-0690">Ribosome biogenesis</keyword>
<gene>
    <name evidence="1" type="primary">rbfA</name>
    <name type="ordered locus">Geob_2693</name>
</gene>
<proteinExistence type="inferred from homology"/>
<name>RBFA_GEODF</name>
<sequence length="123" mass="13916">MFKRSEKVAEAVHELVSELLVKGLKDPRIGFVTITGVKVTDDMHLATIYFTVIGSDEEKKATEQGLNSARGFIRKEMGKSFRMRYVPDIVFKYDASVEYGSRIESILKEIGSPEHDDNDKENS</sequence>
<evidence type="ECO:0000255" key="1">
    <source>
        <dbReference type="HAMAP-Rule" id="MF_00003"/>
    </source>
</evidence>
<comment type="function">
    <text evidence="1">One of several proteins that assist in the late maturation steps of the functional core of the 30S ribosomal subunit. Associates with free 30S ribosomal subunits (but not with 30S subunits that are part of 70S ribosomes or polysomes). Required for efficient processing of 16S rRNA. May interact with the 5'-terminal helix region of 16S rRNA.</text>
</comment>
<comment type="subunit">
    <text evidence="1">Monomer. Binds 30S ribosomal subunits, but not 50S ribosomal subunits or 70S ribosomes.</text>
</comment>
<comment type="subcellular location">
    <subcellularLocation>
        <location evidence="1">Cytoplasm</location>
    </subcellularLocation>
</comment>
<comment type="similarity">
    <text evidence="1">Belongs to the RbfA family.</text>
</comment>
<organism>
    <name type="scientific">Geotalea daltonii (strain DSM 22248 / JCM 15807 / FRC-32)</name>
    <name type="common">Geobacter daltonii</name>
    <dbReference type="NCBI Taxonomy" id="316067"/>
    <lineage>
        <taxon>Bacteria</taxon>
        <taxon>Pseudomonadati</taxon>
        <taxon>Thermodesulfobacteriota</taxon>
        <taxon>Desulfuromonadia</taxon>
        <taxon>Geobacterales</taxon>
        <taxon>Geobacteraceae</taxon>
        <taxon>Geotalea</taxon>
    </lineage>
</organism>
<reference key="1">
    <citation type="submission" date="2009-01" db="EMBL/GenBank/DDBJ databases">
        <title>Complete sequence of Geobacter sp. FRC-32.</title>
        <authorList>
            <consortium name="US DOE Joint Genome Institute"/>
            <person name="Lucas S."/>
            <person name="Copeland A."/>
            <person name="Lapidus A."/>
            <person name="Glavina del Rio T."/>
            <person name="Dalin E."/>
            <person name="Tice H."/>
            <person name="Bruce D."/>
            <person name="Goodwin L."/>
            <person name="Pitluck S."/>
            <person name="Saunders E."/>
            <person name="Brettin T."/>
            <person name="Detter J.C."/>
            <person name="Han C."/>
            <person name="Larimer F."/>
            <person name="Land M."/>
            <person name="Hauser L."/>
            <person name="Kyrpides N."/>
            <person name="Ovchinnikova G."/>
            <person name="Kostka J."/>
            <person name="Richardson P."/>
        </authorList>
    </citation>
    <scope>NUCLEOTIDE SEQUENCE [LARGE SCALE GENOMIC DNA]</scope>
    <source>
        <strain>DSM 22248 / JCM 15807 / FRC-32</strain>
    </source>
</reference>
<feature type="chain" id="PRO_1000193261" description="Ribosome-binding factor A">
    <location>
        <begin position="1"/>
        <end position="123"/>
    </location>
</feature>
<protein>
    <recommendedName>
        <fullName evidence="1">Ribosome-binding factor A</fullName>
    </recommendedName>
</protein>